<name>RL9_VIBCH</name>
<accession>Q9KUY9</accession>
<reference key="1">
    <citation type="journal article" date="2000" name="Nature">
        <title>DNA sequence of both chromosomes of the cholera pathogen Vibrio cholerae.</title>
        <authorList>
            <person name="Heidelberg J.F."/>
            <person name="Eisen J.A."/>
            <person name="Nelson W.C."/>
            <person name="Clayton R.A."/>
            <person name="Gwinn M.L."/>
            <person name="Dodson R.J."/>
            <person name="Haft D.H."/>
            <person name="Hickey E.K."/>
            <person name="Peterson J.D."/>
            <person name="Umayam L.A."/>
            <person name="Gill S.R."/>
            <person name="Nelson K.E."/>
            <person name="Read T.D."/>
            <person name="Tettelin H."/>
            <person name="Richardson D.L."/>
            <person name="Ermolaeva M.D."/>
            <person name="Vamathevan J.J."/>
            <person name="Bass S."/>
            <person name="Qin H."/>
            <person name="Dragoi I."/>
            <person name="Sellers P."/>
            <person name="McDonald L.A."/>
            <person name="Utterback T.R."/>
            <person name="Fleischmann R.D."/>
            <person name="Nierman W.C."/>
            <person name="White O."/>
            <person name="Salzberg S.L."/>
            <person name="Smith H.O."/>
            <person name="Colwell R.R."/>
            <person name="Mekalanos J.J."/>
            <person name="Venter J.C."/>
            <person name="Fraser C.M."/>
        </authorList>
    </citation>
    <scope>NUCLEOTIDE SEQUENCE [LARGE SCALE GENOMIC DNA]</scope>
    <source>
        <strain>ATCC 39315 / El Tor Inaba N16961</strain>
    </source>
</reference>
<proteinExistence type="inferred from homology"/>
<dbReference type="EMBL" id="AE003852">
    <property type="protein sequence ID" value="AAF93542.1"/>
    <property type="molecule type" value="Genomic_DNA"/>
</dbReference>
<dbReference type="PIR" id="C82333">
    <property type="entry name" value="C82333"/>
</dbReference>
<dbReference type="RefSeq" id="NP_230023.1">
    <property type="nucleotide sequence ID" value="NC_002505.1"/>
</dbReference>
<dbReference type="RefSeq" id="WP_001196054.1">
    <property type="nucleotide sequence ID" value="NZ_LT906614.1"/>
</dbReference>
<dbReference type="SMR" id="Q9KUY9"/>
<dbReference type="STRING" id="243277.VC_0369"/>
<dbReference type="DNASU" id="2615048"/>
<dbReference type="EnsemblBacteria" id="AAF93542">
    <property type="protein sequence ID" value="AAF93542"/>
    <property type="gene ID" value="VC_0369"/>
</dbReference>
<dbReference type="GeneID" id="88783676"/>
<dbReference type="KEGG" id="vch:VC_0369"/>
<dbReference type="PATRIC" id="fig|243277.26.peg.345"/>
<dbReference type="eggNOG" id="COG0359">
    <property type="taxonomic scope" value="Bacteria"/>
</dbReference>
<dbReference type="HOGENOM" id="CLU_078938_4_1_6"/>
<dbReference type="Proteomes" id="UP000000584">
    <property type="component" value="Chromosome 1"/>
</dbReference>
<dbReference type="GO" id="GO:0022625">
    <property type="term" value="C:cytosolic large ribosomal subunit"/>
    <property type="evidence" value="ECO:0000318"/>
    <property type="project" value="GO_Central"/>
</dbReference>
<dbReference type="GO" id="GO:0019843">
    <property type="term" value="F:rRNA binding"/>
    <property type="evidence" value="ECO:0007669"/>
    <property type="project" value="UniProtKB-UniRule"/>
</dbReference>
<dbReference type="GO" id="GO:0003735">
    <property type="term" value="F:structural constituent of ribosome"/>
    <property type="evidence" value="ECO:0007669"/>
    <property type="project" value="InterPro"/>
</dbReference>
<dbReference type="GO" id="GO:0006412">
    <property type="term" value="P:translation"/>
    <property type="evidence" value="ECO:0007669"/>
    <property type="project" value="UniProtKB-UniRule"/>
</dbReference>
<dbReference type="FunFam" id="3.10.430.100:FF:000001">
    <property type="entry name" value="50S ribosomal protein L9"/>
    <property type="match status" value="1"/>
</dbReference>
<dbReference type="FunFam" id="3.40.5.10:FF:000001">
    <property type="entry name" value="50S ribosomal protein L9"/>
    <property type="match status" value="1"/>
</dbReference>
<dbReference type="Gene3D" id="3.10.430.100">
    <property type="entry name" value="Ribosomal protein L9, C-terminal domain"/>
    <property type="match status" value="1"/>
</dbReference>
<dbReference type="Gene3D" id="3.40.5.10">
    <property type="entry name" value="Ribosomal protein L9, N-terminal domain"/>
    <property type="match status" value="1"/>
</dbReference>
<dbReference type="HAMAP" id="MF_00503">
    <property type="entry name" value="Ribosomal_bL9"/>
    <property type="match status" value="1"/>
</dbReference>
<dbReference type="InterPro" id="IPR000244">
    <property type="entry name" value="Ribosomal_bL9"/>
</dbReference>
<dbReference type="InterPro" id="IPR009027">
    <property type="entry name" value="Ribosomal_bL9/RNase_H1_N"/>
</dbReference>
<dbReference type="InterPro" id="IPR020594">
    <property type="entry name" value="Ribosomal_bL9_bac/chp"/>
</dbReference>
<dbReference type="InterPro" id="IPR020069">
    <property type="entry name" value="Ribosomal_bL9_C"/>
</dbReference>
<dbReference type="InterPro" id="IPR036791">
    <property type="entry name" value="Ribosomal_bL9_C_sf"/>
</dbReference>
<dbReference type="InterPro" id="IPR020070">
    <property type="entry name" value="Ribosomal_bL9_N"/>
</dbReference>
<dbReference type="InterPro" id="IPR036935">
    <property type="entry name" value="Ribosomal_bL9_N_sf"/>
</dbReference>
<dbReference type="NCBIfam" id="TIGR00158">
    <property type="entry name" value="L9"/>
    <property type="match status" value="1"/>
</dbReference>
<dbReference type="PANTHER" id="PTHR21368">
    <property type="entry name" value="50S RIBOSOMAL PROTEIN L9"/>
    <property type="match status" value="1"/>
</dbReference>
<dbReference type="Pfam" id="PF03948">
    <property type="entry name" value="Ribosomal_L9_C"/>
    <property type="match status" value="1"/>
</dbReference>
<dbReference type="Pfam" id="PF01281">
    <property type="entry name" value="Ribosomal_L9_N"/>
    <property type="match status" value="1"/>
</dbReference>
<dbReference type="SUPFAM" id="SSF55658">
    <property type="entry name" value="L9 N-domain-like"/>
    <property type="match status" value="1"/>
</dbReference>
<dbReference type="SUPFAM" id="SSF55653">
    <property type="entry name" value="Ribosomal protein L9 C-domain"/>
    <property type="match status" value="1"/>
</dbReference>
<dbReference type="PROSITE" id="PS00651">
    <property type="entry name" value="RIBOSOMAL_L9"/>
    <property type="match status" value="1"/>
</dbReference>
<evidence type="ECO:0000255" key="1">
    <source>
        <dbReference type="HAMAP-Rule" id="MF_00503"/>
    </source>
</evidence>
<evidence type="ECO:0000305" key="2"/>
<protein>
    <recommendedName>
        <fullName evidence="1">Large ribosomal subunit protein bL9</fullName>
    </recommendedName>
    <alternativeName>
        <fullName evidence="2">50S ribosomal protein L9</fullName>
    </alternativeName>
</protein>
<gene>
    <name evidence="1" type="primary">rplI</name>
    <name type="ordered locus">VC_0369</name>
</gene>
<organism>
    <name type="scientific">Vibrio cholerae serotype O1 (strain ATCC 39315 / El Tor Inaba N16961)</name>
    <dbReference type="NCBI Taxonomy" id="243277"/>
    <lineage>
        <taxon>Bacteria</taxon>
        <taxon>Pseudomonadati</taxon>
        <taxon>Pseudomonadota</taxon>
        <taxon>Gammaproteobacteria</taxon>
        <taxon>Vibrionales</taxon>
        <taxon>Vibrionaceae</taxon>
        <taxon>Vibrio</taxon>
    </lineage>
</organism>
<sequence length="149" mass="15611">MQVILLDKIGNLGSLGDTVNVKSGYARNFLIPQGKAVMATKANVAMFESRRAELEAKVAEQLAAAQTRADQVNALEAVVIASKAGDEGKLFGSIGTRDIADAITAAGVKVSKSEVRLPEGALRNVGAYEVSVQLHSEVFATAKVQVVAE</sequence>
<comment type="function">
    <text evidence="1">Binds to the 23S rRNA.</text>
</comment>
<comment type="similarity">
    <text evidence="1">Belongs to the bacterial ribosomal protein bL9 family.</text>
</comment>
<feature type="chain" id="PRO_0000176701" description="Large ribosomal subunit protein bL9">
    <location>
        <begin position="1"/>
        <end position="149"/>
    </location>
</feature>
<keyword id="KW-1185">Reference proteome</keyword>
<keyword id="KW-0687">Ribonucleoprotein</keyword>
<keyword id="KW-0689">Ribosomal protein</keyword>
<keyword id="KW-0694">RNA-binding</keyword>
<keyword id="KW-0699">rRNA-binding</keyword>